<gene>
    <name type="primary">omp2b</name>
</gene>
<protein>
    <recommendedName>
        <fullName>Porin Omp2b</fullName>
    </recommendedName>
</protein>
<sequence length="362" mass="38650">MNIKSLLLGSAAALVAASGAQAADAIVAPEPEAVEYVRVCDAYGAGYFYIPGTETCLRVHGYVRYDVKGGDDVYSGTDRNGWDKSARFALRVSTGSETELGTLKTFTELRFNYAANNSGVDGKYGNETSSGTVMEFAYIQLGGLRVGIDESEFHTFTGYLGDVINDDVISAGSYRTGKISYTFTGGNGFSAVIALEQGGDNDGGYTGTTNYHIDGYMPDVVGGLKYAGGWGSIAGVVAYDSVIEEWAAKVRGDVNITDQFSVWLQGAYSSAATPNQNYGQWGGDWAVWGGAKFIATEKATFNLQAAHDDWGKTAVTANVAYELVPGFTVAPEVSYTKFGGEWKNTVAEDNAWGGIVRFQRSF</sequence>
<keyword id="KW-0998">Cell outer membrane</keyword>
<keyword id="KW-0406">Ion transport</keyword>
<keyword id="KW-0472">Membrane</keyword>
<keyword id="KW-0626">Porin</keyword>
<keyword id="KW-0732">Signal</keyword>
<keyword id="KW-0812">Transmembrane</keyword>
<keyword id="KW-1134">Transmembrane beta strand</keyword>
<keyword id="KW-0813">Transport</keyword>
<proteinExistence type="inferred from homology"/>
<accession>Q45324</accession>
<dbReference type="EMBL" id="U26441">
    <property type="protein sequence ID" value="AAA67793.1"/>
    <property type="status" value="ALT_INIT"/>
    <property type="molecule type" value="Genomic_DNA"/>
</dbReference>
<dbReference type="RefSeq" id="WP_025198748.1">
    <property type="nucleotide sequence ID" value="NZ_UIGH01000001.1"/>
</dbReference>
<dbReference type="SMR" id="Q45324"/>
<dbReference type="GO" id="GO:0009279">
    <property type="term" value="C:cell outer membrane"/>
    <property type="evidence" value="ECO:0007669"/>
    <property type="project" value="UniProtKB-SubCell"/>
</dbReference>
<dbReference type="GO" id="GO:0046930">
    <property type="term" value="C:pore complex"/>
    <property type="evidence" value="ECO:0007669"/>
    <property type="project" value="UniProtKB-KW"/>
</dbReference>
<dbReference type="GO" id="GO:0015288">
    <property type="term" value="F:porin activity"/>
    <property type="evidence" value="ECO:0007669"/>
    <property type="project" value="UniProtKB-KW"/>
</dbReference>
<dbReference type="GO" id="GO:0006811">
    <property type="term" value="P:monoatomic ion transport"/>
    <property type="evidence" value="ECO:0007669"/>
    <property type="project" value="UniProtKB-KW"/>
</dbReference>
<dbReference type="InterPro" id="IPR003684">
    <property type="entry name" value="Porin_alphabac"/>
</dbReference>
<dbReference type="Pfam" id="PF02530">
    <property type="entry name" value="Porin_2"/>
    <property type="match status" value="1"/>
</dbReference>
<dbReference type="SUPFAM" id="SSF56935">
    <property type="entry name" value="Porins"/>
    <property type="match status" value="1"/>
</dbReference>
<evidence type="ECO:0000250" key="1">
    <source>
        <dbReference type="UniProtKB" id="Q44665"/>
    </source>
</evidence>
<evidence type="ECO:0000255" key="2"/>
<evidence type="ECO:0000305" key="3"/>
<name>OMP2B_BRUNE</name>
<reference key="1">
    <citation type="journal article" date="1996" name="Int. J. Syst. Bacteriol.">
        <title>Species-specific sequences at the omp2 locus of Brucella type strains.</title>
        <authorList>
            <person name="Ficht T.A."/>
            <person name="Husseinen H.S."/>
            <person name="Derr J."/>
            <person name="Bearden S.W."/>
        </authorList>
    </citation>
    <scope>NUCLEOTIDE SEQUENCE [GENOMIC DNA]</scope>
</reference>
<comment type="function">
    <text evidence="1">Forms passive diffusion pores that allow small molecular weight hydrophilic materials across the outer membrane.</text>
</comment>
<comment type="subunit">
    <text evidence="1">Homotrimer.</text>
</comment>
<comment type="subcellular location">
    <subcellularLocation>
        <location evidence="1">Cell outer membrane</location>
        <topology evidence="1">Multi-pass membrane protein</topology>
    </subcellularLocation>
</comment>
<comment type="domain">
    <text evidence="1">Consists of 16-stranded beta-barrel sheets, with large surface-exposed loops, that form a transmembrane pore at the center of each barrel. The pore is partially ocluded by a peptide loop that folds into the pore lumen.</text>
</comment>
<comment type="miscellaneous">
    <text evidence="1">The pore formed by Omp2a is larger than the one formed by Omp2b. Omp2b pores have optimal permeability to allow growth and protection against harmful compounds. The larger pore formed by Omp2a may be advantageous for intracellular growth, when the bacterium is competing with the host cell for nutrients whose concentration is particularly low within the phagosome.</text>
</comment>
<comment type="similarity">
    <text evidence="3">Belongs to the alphaproteobacteria porin family.</text>
</comment>
<comment type="sequence caution" evidence="3">
    <conflict type="erroneous initiation">
        <sequence resource="EMBL-CDS" id="AAA67793"/>
    </conflict>
</comment>
<organism>
    <name type="scientific">Brucella neotomae</name>
    <dbReference type="NCBI Taxonomy" id="29460"/>
    <lineage>
        <taxon>Bacteria</taxon>
        <taxon>Pseudomonadati</taxon>
        <taxon>Pseudomonadota</taxon>
        <taxon>Alphaproteobacteria</taxon>
        <taxon>Hyphomicrobiales</taxon>
        <taxon>Brucellaceae</taxon>
        <taxon>Brucella/Ochrobactrum group</taxon>
        <taxon>Brucella</taxon>
    </lineage>
</organism>
<feature type="signal peptide" evidence="2">
    <location>
        <begin position="1"/>
        <end position="22"/>
    </location>
</feature>
<feature type="chain" id="PRO_0000354016" description="Porin Omp2b">
    <location>
        <begin position="23"/>
        <end position="362"/>
    </location>
</feature>